<dbReference type="EMBL" id="CP001029">
    <property type="protein sequence ID" value="ACB80288.1"/>
    <property type="molecule type" value="Genomic_DNA"/>
</dbReference>
<dbReference type="RefSeq" id="WP_012454029.1">
    <property type="nucleotide sequence ID" value="NC_010725.1"/>
</dbReference>
<dbReference type="SMR" id="B1ZLK7"/>
<dbReference type="STRING" id="441620.Mpop_2126"/>
<dbReference type="KEGG" id="mpo:Mpop_2126"/>
<dbReference type="eggNOG" id="COG0090">
    <property type="taxonomic scope" value="Bacteria"/>
</dbReference>
<dbReference type="HOGENOM" id="CLU_036235_2_1_5"/>
<dbReference type="OrthoDB" id="9778722at2"/>
<dbReference type="Proteomes" id="UP000007136">
    <property type="component" value="Chromosome"/>
</dbReference>
<dbReference type="GO" id="GO:0015934">
    <property type="term" value="C:large ribosomal subunit"/>
    <property type="evidence" value="ECO:0007669"/>
    <property type="project" value="InterPro"/>
</dbReference>
<dbReference type="GO" id="GO:0019843">
    <property type="term" value="F:rRNA binding"/>
    <property type="evidence" value="ECO:0007669"/>
    <property type="project" value="UniProtKB-UniRule"/>
</dbReference>
<dbReference type="GO" id="GO:0003735">
    <property type="term" value="F:structural constituent of ribosome"/>
    <property type="evidence" value="ECO:0007669"/>
    <property type="project" value="InterPro"/>
</dbReference>
<dbReference type="GO" id="GO:0016740">
    <property type="term" value="F:transferase activity"/>
    <property type="evidence" value="ECO:0007669"/>
    <property type="project" value="InterPro"/>
</dbReference>
<dbReference type="GO" id="GO:0002181">
    <property type="term" value="P:cytoplasmic translation"/>
    <property type="evidence" value="ECO:0007669"/>
    <property type="project" value="TreeGrafter"/>
</dbReference>
<dbReference type="FunFam" id="2.30.30.30:FF:000001">
    <property type="entry name" value="50S ribosomal protein L2"/>
    <property type="match status" value="1"/>
</dbReference>
<dbReference type="FunFam" id="4.10.950.10:FF:000001">
    <property type="entry name" value="50S ribosomal protein L2"/>
    <property type="match status" value="1"/>
</dbReference>
<dbReference type="Gene3D" id="2.30.30.30">
    <property type="match status" value="1"/>
</dbReference>
<dbReference type="Gene3D" id="2.40.50.140">
    <property type="entry name" value="Nucleic acid-binding proteins"/>
    <property type="match status" value="1"/>
</dbReference>
<dbReference type="Gene3D" id="4.10.950.10">
    <property type="entry name" value="Ribosomal protein L2, domain 3"/>
    <property type="match status" value="1"/>
</dbReference>
<dbReference type="HAMAP" id="MF_01320_B">
    <property type="entry name" value="Ribosomal_uL2_B"/>
    <property type="match status" value="1"/>
</dbReference>
<dbReference type="InterPro" id="IPR012340">
    <property type="entry name" value="NA-bd_OB-fold"/>
</dbReference>
<dbReference type="InterPro" id="IPR014722">
    <property type="entry name" value="Rib_uL2_dom2"/>
</dbReference>
<dbReference type="InterPro" id="IPR002171">
    <property type="entry name" value="Ribosomal_uL2"/>
</dbReference>
<dbReference type="InterPro" id="IPR005880">
    <property type="entry name" value="Ribosomal_uL2_bac/org-type"/>
</dbReference>
<dbReference type="InterPro" id="IPR022669">
    <property type="entry name" value="Ribosomal_uL2_C"/>
</dbReference>
<dbReference type="InterPro" id="IPR022671">
    <property type="entry name" value="Ribosomal_uL2_CS"/>
</dbReference>
<dbReference type="InterPro" id="IPR014726">
    <property type="entry name" value="Ribosomal_uL2_dom3"/>
</dbReference>
<dbReference type="InterPro" id="IPR022666">
    <property type="entry name" value="Ribosomal_uL2_RNA-bd_dom"/>
</dbReference>
<dbReference type="InterPro" id="IPR008991">
    <property type="entry name" value="Translation_prot_SH3-like_sf"/>
</dbReference>
<dbReference type="NCBIfam" id="TIGR01171">
    <property type="entry name" value="rplB_bact"/>
    <property type="match status" value="1"/>
</dbReference>
<dbReference type="PANTHER" id="PTHR13691:SF5">
    <property type="entry name" value="LARGE RIBOSOMAL SUBUNIT PROTEIN UL2M"/>
    <property type="match status" value="1"/>
</dbReference>
<dbReference type="PANTHER" id="PTHR13691">
    <property type="entry name" value="RIBOSOMAL PROTEIN L2"/>
    <property type="match status" value="1"/>
</dbReference>
<dbReference type="Pfam" id="PF00181">
    <property type="entry name" value="Ribosomal_L2"/>
    <property type="match status" value="1"/>
</dbReference>
<dbReference type="Pfam" id="PF03947">
    <property type="entry name" value="Ribosomal_L2_C"/>
    <property type="match status" value="1"/>
</dbReference>
<dbReference type="PIRSF" id="PIRSF002158">
    <property type="entry name" value="Ribosomal_L2"/>
    <property type="match status" value="1"/>
</dbReference>
<dbReference type="SMART" id="SM01383">
    <property type="entry name" value="Ribosomal_L2"/>
    <property type="match status" value="1"/>
</dbReference>
<dbReference type="SMART" id="SM01382">
    <property type="entry name" value="Ribosomal_L2_C"/>
    <property type="match status" value="1"/>
</dbReference>
<dbReference type="SUPFAM" id="SSF50249">
    <property type="entry name" value="Nucleic acid-binding proteins"/>
    <property type="match status" value="1"/>
</dbReference>
<dbReference type="SUPFAM" id="SSF50104">
    <property type="entry name" value="Translation proteins SH3-like domain"/>
    <property type="match status" value="1"/>
</dbReference>
<dbReference type="PROSITE" id="PS00467">
    <property type="entry name" value="RIBOSOMAL_L2"/>
    <property type="match status" value="1"/>
</dbReference>
<gene>
    <name evidence="1" type="primary">rplB</name>
    <name type="ordered locus">Mpop_2126</name>
</gene>
<keyword id="KW-0687">Ribonucleoprotein</keyword>
<keyword id="KW-0689">Ribosomal protein</keyword>
<keyword id="KW-0694">RNA-binding</keyword>
<keyword id="KW-0699">rRNA-binding</keyword>
<feature type="chain" id="PRO_1000141579" description="Large ribosomal subunit protein uL2">
    <location>
        <begin position="1"/>
        <end position="278"/>
    </location>
</feature>
<feature type="region of interest" description="Disordered" evidence="2">
    <location>
        <begin position="212"/>
        <end position="278"/>
    </location>
</feature>
<feature type="compositionally biased region" description="Basic residues" evidence="2">
    <location>
        <begin position="212"/>
        <end position="221"/>
    </location>
</feature>
<organism>
    <name type="scientific">Methylorubrum populi (strain ATCC BAA-705 / NCIMB 13946 / BJ001)</name>
    <name type="common">Methylobacterium populi</name>
    <dbReference type="NCBI Taxonomy" id="441620"/>
    <lineage>
        <taxon>Bacteria</taxon>
        <taxon>Pseudomonadati</taxon>
        <taxon>Pseudomonadota</taxon>
        <taxon>Alphaproteobacteria</taxon>
        <taxon>Hyphomicrobiales</taxon>
        <taxon>Methylobacteriaceae</taxon>
        <taxon>Methylorubrum</taxon>
    </lineage>
</organism>
<reference key="1">
    <citation type="submission" date="2008-04" db="EMBL/GenBank/DDBJ databases">
        <title>Complete sequence of chromosome of Methylobacterium populi BJ001.</title>
        <authorList>
            <consortium name="US DOE Joint Genome Institute"/>
            <person name="Copeland A."/>
            <person name="Lucas S."/>
            <person name="Lapidus A."/>
            <person name="Glavina del Rio T."/>
            <person name="Dalin E."/>
            <person name="Tice H."/>
            <person name="Bruce D."/>
            <person name="Goodwin L."/>
            <person name="Pitluck S."/>
            <person name="Chertkov O."/>
            <person name="Brettin T."/>
            <person name="Detter J.C."/>
            <person name="Han C."/>
            <person name="Kuske C.R."/>
            <person name="Schmutz J."/>
            <person name="Larimer F."/>
            <person name="Land M."/>
            <person name="Hauser L."/>
            <person name="Kyrpides N."/>
            <person name="Mikhailova N."/>
            <person name="Marx C."/>
            <person name="Richardson P."/>
        </authorList>
    </citation>
    <scope>NUCLEOTIDE SEQUENCE [LARGE SCALE GENOMIC DNA]</scope>
    <source>
        <strain>ATCC BAA-705 / NCIMB 13946 / BJ001</strain>
    </source>
</reference>
<proteinExistence type="inferred from homology"/>
<comment type="function">
    <text evidence="1">One of the primary rRNA binding proteins. Required for association of the 30S and 50S subunits to form the 70S ribosome, for tRNA binding and peptide bond formation. It has been suggested to have peptidyltransferase activity; this is somewhat controversial. Makes several contacts with the 16S rRNA in the 70S ribosome.</text>
</comment>
<comment type="subunit">
    <text evidence="1">Part of the 50S ribosomal subunit. Forms a bridge to the 30S subunit in the 70S ribosome.</text>
</comment>
<comment type="similarity">
    <text evidence="1">Belongs to the universal ribosomal protein uL2 family.</text>
</comment>
<accession>B1ZLK7</accession>
<protein>
    <recommendedName>
        <fullName evidence="1">Large ribosomal subunit protein uL2</fullName>
    </recommendedName>
    <alternativeName>
        <fullName evidence="3">50S ribosomal protein L2</fullName>
    </alternativeName>
</protein>
<name>RL2_METPB</name>
<evidence type="ECO:0000255" key="1">
    <source>
        <dbReference type="HAMAP-Rule" id="MF_01320"/>
    </source>
</evidence>
<evidence type="ECO:0000256" key="2">
    <source>
        <dbReference type="SAM" id="MobiDB-lite"/>
    </source>
</evidence>
<evidence type="ECO:0000305" key="3"/>
<sequence length="278" mass="30213">MALKTFKPVTPSLRQLVLVDRRELYKGKPVKALTEGKSSSGGRNNLGRITVRFRGGGHKRVLRNVDFKRRENLNVPATVERIEYDPNRTAFIALITFPDGKQSYILAPQRLSPGDKVVAGESVDVKPGNAGPIGSMPVGTIVHNVELKIGKGGAIARSAGNYAQIVGRDQGYVTLRLNSGEQRLVHGQCFASVGAVSNPDHMNISLGKAGRNRWLGKRPHNRGVAMNPVDHPHGGGEGRTSGGRNPVTPWGVPTKGKKTRSNKRTDTFILSSRHNRKK</sequence>